<name>IAA4_DELRE</name>
<reference evidence="4" key="1">
    <citation type="journal article" date="2009" name="Pestic. Biochem. Physiol.">
        <title>Identification of four novel members of Kunitz-like alpha-amylase inhibitors family from Delonix regia with activity toward Coleopteran insects.</title>
        <authorList>
            <person name="Alves D.T."/>
            <person name="Vasconcelos I.M."/>
            <person name="Oliveira J.T.A."/>
            <person name="Farias L.R."/>
            <person name="Dias S.C."/>
            <person name="Chiarello M.D."/>
            <person name="Maria-Neto S."/>
            <person name="Franco O.L."/>
        </authorList>
    </citation>
    <scope>PROTEIN SEQUENCE</scope>
    <scope>FUNCTION</scope>
    <source>
        <tissue evidence="2">Seed</tissue>
    </source>
</reference>
<proteinExistence type="evidence at protein level"/>
<keyword id="KW-0022">Alpha-amylase inhibitor</keyword>
<keyword id="KW-0903">Direct protein sequencing</keyword>
<protein>
    <recommendedName>
        <fullName evidence="3">Alpha-amylase inhibitor DR4</fullName>
    </recommendedName>
</protein>
<dbReference type="GO" id="GO:0015066">
    <property type="term" value="F:alpha-amylase inhibitor activity"/>
    <property type="evidence" value="ECO:0007669"/>
    <property type="project" value="UniProtKB-KW"/>
</dbReference>
<sequence>SGGGKEAAETFNRVESHPRPDA</sequence>
<organism>
    <name type="scientific">Delonix regia</name>
    <name type="common">Royal poinciana</name>
    <name type="synonym">Poinciana regia</name>
    <dbReference type="NCBI Taxonomy" id="72433"/>
    <lineage>
        <taxon>Eukaryota</taxon>
        <taxon>Viridiplantae</taxon>
        <taxon>Streptophyta</taxon>
        <taxon>Embryophyta</taxon>
        <taxon>Tracheophyta</taxon>
        <taxon>Spermatophyta</taxon>
        <taxon>Magnoliopsida</taxon>
        <taxon>eudicotyledons</taxon>
        <taxon>Gunneridae</taxon>
        <taxon>Pentapetalae</taxon>
        <taxon>rosids</taxon>
        <taxon>fabids</taxon>
        <taxon>Fabales</taxon>
        <taxon>Fabaceae</taxon>
        <taxon>Caesalpinioideae</taxon>
        <taxon>Peltophorum clade</taxon>
        <taxon>Delonix</taxon>
    </lineage>
</organism>
<accession>P86367</accession>
<evidence type="ECO:0000256" key="1">
    <source>
        <dbReference type="SAM" id="MobiDB-lite"/>
    </source>
</evidence>
<evidence type="ECO:0000269" key="2">
    <source ref="1"/>
</evidence>
<evidence type="ECO:0000303" key="3">
    <source ref="1"/>
</evidence>
<evidence type="ECO:0000305" key="4"/>
<feature type="chain" id="PRO_0000389534" description="Alpha-amylase inhibitor DR4">
    <location>
        <begin position="1"/>
        <end position="22" status="greater than"/>
    </location>
</feature>
<feature type="region of interest" description="Disordered" evidence="1">
    <location>
        <begin position="1"/>
        <end position="22"/>
    </location>
</feature>
<feature type="non-terminal residue" evidence="3">
    <location>
        <position position="22"/>
    </location>
</feature>
<comment type="function">
    <text evidence="2">Inhibits insect alpha-amylases.</text>
</comment>